<reference key="1">
    <citation type="submission" date="2008-06" db="EMBL/GenBank/DDBJ databases">
        <title>Complete sequence of Chlorobaculum parvum NCIB 8327.</title>
        <authorList>
            <consortium name="US DOE Joint Genome Institute"/>
            <person name="Lucas S."/>
            <person name="Copeland A."/>
            <person name="Lapidus A."/>
            <person name="Glavina del Rio T."/>
            <person name="Dalin E."/>
            <person name="Tice H."/>
            <person name="Bruce D."/>
            <person name="Goodwin L."/>
            <person name="Pitluck S."/>
            <person name="Schmutz J."/>
            <person name="Larimer F."/>
            <person name="Land M."/>
            <person name="Hauser L."/>
            <person name="Kyrpides N."/>
            <person name="Mikhailova N."/>
            <person name="Zhao F."/>
            <person name="Li T."/>
            <person name="Liu Z."/>
            <person name="Overmann J."/>
            <person name="Bryant D.A."/>
            <person name="Richardson P."/>
        </authorList>
    </citation>
    <scope>NUCLEOTIDE SEQUENCE [LARGE SCALE GENOMIC DNA]</scope>
    <source>
        <strain>DSM 263 / NCIMB 8327</strain>
    </source>
</reference>
<name>GMHA_CHLP8</name>
<proteinExistence type="inferred from homology"/>
<sequence length="209" mass="21991">MTRQCNCSEGSCGSGRYEELVLERMLYSARLKETVARRDSDVIAAMATMIAETFRNGGKVLLCGNGGSAADAQHLAAELTIRYRSSVNRPALPAIALSTDTSALTAGANDLGFDEVFSRLTEAYGRPGDLLLGLSTSGNSPNVLKALQTARKLGLKTLALLGGDGGTIRPHADLAVVVPHTGSADRTQECHIAIGHVIVELVESMMGYA</sequence>
<keyword id="KW-0119">Carbohydrate metabolism</keyword>
<keyword id="KW-0963">Cytoplasm</keyword>
<keyword id="KW-0413">Isomerase</keyword>
<keyword id="KW-0479">Metal-binding</keyword>
<keyword id="KW-0862">Zinc</keyword>
<evidence type="ECO:0000255" key="1">
    <source>
        <dbReference type="HAMAP-Rule" id="MF_00067"/>
    </source>
</evidence>
<accession>B3QL68</accession>
<feature type="chain" id="PRO_1000092266" description="Phosphoheptose isomerase">
    <location>
        <begin position="1"/>
        <end position="209"/>
    </location>
</feature>
<feature type="domain" description="SIS" evidence="1">
    <location>
        <begin position="50"/>
        <end position="209"/>
    </location>
</feature>
<feature type="binding site" evidence="1">
    <location>
        <begin position="65"/>
        <end position="67"/>
    </location>
    <ligand>
        <name>substrate</name>
    </ligand>
</feature>
<feature type="binding site" evidence="1">
    <location>
        <position position="74"/>
    </location>
    <ligand>
        <name>Zn(2+)</name>
        <dbReference type="ChEBI" id="CHEBI:29105"/>
    </ligand>
</feature>
<feature type="binding site" evidence="1">
    <location>
        <position position="78"/>
    </location>
    <ligand>
        <name>substrate</name>
    </ligand>
</feature>
<feature type="binding site" evidence="1">
    <location>
        <position position="78"/>
    </location>
    <ligand>
        <name>Zn(2+)</name>
        <dbReference type="ChEBI" id="CHEBI:29105"/>
    </ligand>
</feature>
<feature type="binding site" evidence="1">
    <location>
        <begin position="109"/>
        <end position="110"/>
    </location>
    <ligand>
        <name>substrate</name>
    </ligand>
</feature>
<feature type="binding site" evidence="1">
    <location>
        <begin position="135"/>
        <end position="137"/>
    </location>
    <ligand>
        <name>substrate</name>
    </ligand>
</feature>
<feature type="binding site" evidence="1">
    <location>
        <position position="140"/>
    </location>
    <ligand>
        <name>substrate</name>
    </ligand>
</feature>
<feature type="binding site" evidence="1">
    <location>
        <position position="188"/>
    </location>
    <ligand>
        <name>substrate</name>
    </ligand>
</feature>
<feature type="binding site" evidence="1">
    <location>
        <position position="188"/>
    </location>
    <ligand>
        <name>Zn(2+)</name>
        <dbReference type="ChEBI" id="CHEBI:29105"/>
    </ligand>
</feature>
<feature type="binding site" evidence="1">
    <location>
        <position position="196"/>
    </location>
    <ligand>
        <name>Zn(2+)</name>
        <dbReference type="ChEBI" id="CHEBI:29105"/>
    </ligand>
</feature>
<dbReference type="EC" id="5.3.1.28" evidence="1"/>
<dbReference type="EMBL" id="CP001099">
    <property type="protein sequence ID" value="ACF12306.1"/>
    <property type="molecule type" value="Genomic_DNA"/>
</dbReference>
<dbReference type="RefSeq" id="WP_012503139.1">
    <property type="nucleotide sequence ID" value="NC_011027.1"/>
</dbReference>
<dbReference type="SMR" id="B3QL68"/>
<dbReference type="STRING" id="517417.Cpar_1914"/>
<dbReference type="KEGG" id="cpc:Cpar_1914"/>
<dbReference type="eggNOG" id="COG0279">
    <property type="taxonomic scope" value="Bacteria"/>
</dbReference>
<dbReference type="HOGENOM" id="CLU_080999_4_0_10"/>
<dbReference type="OrthoDB" id="9781311at2"/>
<dbReference type="UniPathway" id="UPA00041">
    <property type="reaction ID" value="UER00436"/>
</dbReference>
<dbReference type="Proteomes" id="UP000008811">
    <property type="component" value="Chromosome"/>
</dbReference>
<dbReference type="GO" id="GO:0005737">
    <property type="term" value="C:cytoplasm"/>
    <property type="evidence" value="ECO:0007669"/>
    <property type="project" value="UniProtKB-SubCell"/>
</dbReference>
<dbReference type="GO" id="GO:0097367">
    <property type="term" value="F:carbohydrate derivative binding"/>
    <property type="evidence" value="ECO:0007669"/>
    <property type="project" value="InterPro"/>
</dbReference>
<dbReference type="GO" id="GO:0008968">
    <property type="term" value="F:D-sedoheptulose 7-phosphate isomerase activity"/>
    <property type="evidence" value="ECO:0007669"/>
    <property type="project" value="UniProtKB-UniRule"/>
</dbReference>
<dbReference type="GO" id="GO:0008270">
    <property type="term" value="F:zinc ion binding"/>
    <property type="evidence" value="ECO:0007669"/>
    <property type="project" value="UniProtKB-UniRule"/>
</dbReference>
<dbReference type="GO" id="GO:0005975">
    <property type="term" value="P:carbohydrate metabolic process"/>
    <property type="evidence" value="ECO:0007669"/>
    <property type="project" value="UniProtKB-UniRule"/>
</dbReference>
<dbReference type="GO" id="GO:2001061">
    <property type="term" value="P:D-glycero-D-manno-heptose 7-phosphate biosynthetic process"/>
    <property type="evidence" value="ECO:0007669"/>
    <property type="project" value="UniProtKB-UniPathway"/>
</dbReference>
<dbReference type="CDD" id="cd05006">
    <property type="entry name" value="SIS_GmhA"/>
    <property type="match status" value="1"/>
</dbReference>
<dbReference type="Gene3D" id="3.40.50.10490">
    <property type="entry name" value="Glucose-6-phosphate isomerase like protein, domain 1"/>
    <property type="match status" value="1"/>
</dbReference>
<dbReference type="HAMAP" id="MF_00067">
    <property type="entry name" value="GmhA"/>
    <property type="match status" value="1"/>
</dbReference>
<dbReference type="InterPro" id="IPR035461">
    <property type="entry name" value="GmhA/DiaA"/>
</dbReference>
<dbReference type="InterPro" id="IPR004515">
    <property type="entry name" value="Phosphoheptose_Isoase"/>
</dbReference>
<dbReference type="InterPro" id="IPR001347">
    <property type="entry name" value="SIS_dom"/>
</dbReference>
<dbReference type="InterPro" id="IPR046348">
    <property type="entry name" value="SIS_dom_sf"/>
</dbReference>
<dbReference type="InterPro" id="IPR050099">
    <property type="entry name" value="SIS_GmhA/DiaA_subfam"/>
</dbReference>
<dbReference type="PANTHER" id="PTHR30390:SF6">
    <property type="entry name" value="DNAA INITIATOR-ASSOCIATING PROTEIN DIAA"/>
    <property type="match status" value="1"/>
</dbReference>
<dbReference type="PANTHER" id="PTHR30390">
    <property type="entry name" value="SEDOHEPTULOSE 7-PHOSPHATE ISOMERASE / DNAA INITIATOR-ASSOCIATING FACTOR FOR REPLICATION INITIATION"/>
    <property type="match status" value="1"/>
</dbReference>
<dbReference type="Pfam" id="PF13580">
    <property type="entry name" value="SIS_2"/>
    <property type="match status" value="1"/>
</dbReference>
<dbReference type="SUPFAM" id="SSF53697">
    <property type="entry name" value="SIS domain"/>
    <property type="match status" value="1"/>
</dbReference>
<dbReference type="PROSITE" id="PS51464">
    <property type="entry name" value="SIS"/>
    <property type="match status" value="1"/>
</dbReference>
<organism>
    <name type="scientific">Chlorobaculum parvum (strain DSM 263 / NCIMB 8327)</name>
    <name type="common">Chlorobium vibrioforme subsp. thiosulfatophilum</name>
    <dbReference type="NCBI Taxonomy" id="517417"/>
    <lineage>
        <taxon>Bacteria</taxon>
        <taxon>Pseudomonadati</taxon>
        <taxon>Chlorobiota</taxon>
        <taxon>Chlorobiia</taxon>
        <taxon>Chlorobiales</taxon>
        <taxon>Chlorobiaceae</taxon>
        <taxon>Chlorobaculum</taxon>
    </lineage>
</organism>
<comment type="function">
    <text evidence="1">Catalyzes the isomerization of sedoheptulose 7-phosphate in D-glycero-D-manno-heptose 7-phosphate.</text>
</comment>
<comment type="catalytic activity">
    <reaction evidence="1">
        <text>2 D-sedoheptulose 7-phosphate = D-glycero-alpha-D-manno-heptose 7-phosphate + D-glycero-beta-D-manno-heptose 7-phosphate</text>
        <dbReference type="Rhea" id="RHEA:27489"/>
        <dbReference type="ChEBI" id="CHEBI:57483"/>
        <dbReference type="ChEBI" id="CHEBI:60203"/>
        <dbReference type="ChEBI" id="CHEBI:60204"/>
        <dbReference type="EC" id="5.3.1.28"/>
    </reaction>
</comment>
<comment type="cofactor">
    <cofactor evidence="1">
        <name>Zn(2+)</name>
        <dbReference type="ChEBI" id="CHEBI:29105"/>
    </cofactor>
    <text evidence="1">Binds 1 zinc ion per subunit.</text>
</comment>
<comment type="pathway">
    <text evidence="1">Carbohydrate biosynthesis; D-glycero-D-manno-heptose 7-phosphate biosynthesis; D-glycero-alpha-D-manno-heptose 7-phosphate and D-glycero-beta-D-manno-heptose 7-phosphate from sedoheptulose 7-phosphate: step 1/1.</text>
</comment>
<comment type="subcellular location">
    <subcellularLocation>
        <location evidence="1">Cytoplasm</location>
    </subcellularLocation>
</comment>
<comment type="miscellaneous">
    <text evidence="1">The reaction produces a racemic mixture of D-glycero-alpha-D-manno-heptose 7-phosphate and D-glycero-beta-D-manno-heptose 7-phosphate.</text>
</comment>
<comment type="similarity">
    <text evidence="1">Belongs to the SIS family. GmhA subfamily.</text>
</comment>
<protein>
    <recommendedName>
        <fullName evidence="1">Phosphoheptose isomerase</fullName>
        <ecNumber evidence="1">5.3.1.28</ecNumber>
    </recommendedName>
    <alternativeName>
        <fullName evidence="1">Sedoheptulose 7-phosphate isomerase</fullName>
    </alternativeName>
</protein>
<gene>
    <name evidence="1" type="primary">gmhA</name>
    <name type="ordered locus">Cpar_1914</name>
</gene>